<reference key="1">
    <citation type="journal article" date="2004" name="Proc. Natl. Acad. Sci. U.S.A.">
        <title>Complete genomes of two clinical Staphylococcus aureus strains: evidence for the rapid evolution of virulence and drug resistance.</title>
        <authorList>
            <person name="Holden M.T.G."/>
            <person name="Feil E.J."/>
            <person name="Lindsay J.A."/>
            <person name="Peacock S.J."/>
            <person name="Day N.P.J."/>
            <person name="Enright M.C."/>
            <person name="Foster T.J."/>
            <person name="Moore C.E."/>
            <person name="Hurst L."/>
            <person name="Atkin R."/>
            <person name="Barron A."/>
            <person name="Bason N."/>
            <person name="Bentley S.D."/>
            <person name="Chillingworth C."/>
            <person name="Chillingworth T."/>
            <person name="Churcher C."/>
            <person name="Clark L."/>
            <person name="Corton C."/>
            <person name="Cronin A."/>
            <person name="Doggett J."/>
            <person name="Dowd L."/>
            <person name="Feltwell T."/>
            <person name="Hance Z."/>
            <person name="Harris B."/>
            <person name="Hauser H."/>
            <person name="Holroyd S."/>
            <person name="Jagels K."/>
            <person name="James K.D."/>
            <person name="Lennard N."/>
            <person name="Line A."/>
            <person name="Mayes R."/>
            <person name="Moule S."/>
            <person name="Mungall K."/>
            <person name="Ormond D."/>
            <person name="Quail M.A."/>
            <person name="Rabbinowitsch E."/>
            <person name="Rutherford K.M."/>
            <person name="Sanders M."/>
            <person name="Sharp S."/>
            <person name="Simmonds M."/>
            <person name="Stevens K."/>
            <person name="Whitehead S."/>
            <person name="Barrell B.G."/>
            <person name="Spratt B.G."/>
            <person name="Parkhill J."/>
        </authorList>
    </citation>
    <scope>NUCLEOTIDE SEQUENCE [LARGE SCALE GENOMIC DNA]</scope>
    <source>
        <strain>MRSA252</strain>
    </source>
</reference>
<proteinExistence type="inferred from homology"/>
<accession>Q6GJC5</accession>
<evidence type="ECO:0000255" key="1">
    <source>
        <dbReference type="HAMAP-Rule" id="MF_01322"/>
    </source>
</evidence>
<gene>
    <name evidence="1" type="primary">rpoC</name>
    <name type="ordered locus">SAR0548</name>
</gene>
<dbReference type="EC" id="2.7.7.6" evidence="1"/>
<dbReference type="EMBL" id="BX571856">
    <property type="protein sequence ID" value="CAG39569.1"/>
    <property type="molecule type" value="Genomic_DNA"/>
</dbReference>
<dbReference type="SMR" id="Q6GJC5"/>
<dbReference type="KEGG" id="sar:SAR0548"/>
<dbReference type="HOGENOM" id="CLU_000524_3_0_9"/>
<dbReference type="Proteomes" id="UP000000596">
    <property type="component" value="Chromosome"/>
</dbReference>
<dbReference type="GO" id="GO:0000428">
    <property type="term" value="C:DNA-directed RNA polymerase complex"/>
    <property type="evidence" value="ECO:0007669"/>
    <property type="project" value="UniProtKB-KW"/>
</dbReference>
<dbReference type="GO" id="GO:0003677">
    <property type="term" value="F:DNA binding"/>
    <property type="evidence" value="ECO:0007669"/>
    <property type="project" value="UniProtKB-UniRule"/>
</dbReference>
<dbReference type="GO" id="GO:0003899">
    <property type="term" value="F:DNA-directed RNA polymerase activity"/>
    <property type="evidence" value="ECO:0007669"/>
    <property type="project" value="UniProtKB-UniRule"/>
</dbReference>
<dbReference type="GO" id="GO:0000287">
    <property type="term" value="F:magnesium ion binding"/>
    <property type="evidence" value="ECO:0007669"/>
    <property type="project" value="UniProtKB-UniRule"/>
</dbReference>
<dbReference type="GO" id="GO:0008270">
    <property type="term" value="F:zinc ion binding"/>
    <property type="evidence" value="ECO:0007669"/>
    <property type="project" value="UniProtKB-UniRule"/>
</dbReference>
<dbReference type="GO" id="GO:0006351">
    <property type="term" value="P:DNA-templated transcription"/>
    <property type="evidence" value="ECO:0007669"/>
    <property type="project" value="UniProtKB-UniRule"/>
</dbReference>
<dbReference type="CDD" id="cd02655">
    <property type="entry name" value="RNAP_beta'_C"/>
    <property type="match status" value="1"/>
</dbReference>
<dbReference type="CDD" id="cd01609">
    <property type="entry name" value="RNAP_beta'_N"/>
    <property type="match status" value="1"/>
</dbReference>
<dbReference type="FunFam" id="1.10.132.30:FF:000003">
    <property type="entry name" value="DNA-directed RNA polymerase subunit beta"/>
    <property type="match status" value="1"/>
</dbReference>
<dbReference type="FunFam" id="1.10.150.390:FF:000002">
    <property type="entry name" value="DNA-directed RNA polymerase subunit beta"/>
    <property type="match status" value="1"/>
</dbReference>
<dbReference type="FunFam" id="4.10.860.120:FF:000001">
    <property type="entry name" value="DNA-directed RNA polymerase subunit beta"/>
    <property type="match status" value="1"/>
</dbReference>
<dbReference type="Gene3D" id="1.10.132.30">
    <property type="match status" value="1"/>
</dbReference>
<dbReference type="Gene3D" id="1.10.150.390">
    <property type="match status" value="1"/>
</dbReference>
<dbReference type="Gene3D" id="1.10.1790.20">
    <property type="match status" value="1"/>
</dbReference>
<dbReference type="Gene3D" id="1.10.40.90">
    <property type="match status" value="1"/>
</dbReference>
<dbReference type="Gene3D" id="2.40.40.20">
    <property type="match status" value="1"/>
</dbReference>
<dbReference type="Gene3D" id="2.40.50.100">
    <property type="match status" value="1"/>
</dbReference>
<dbReference type="Gene3D" id="4.10.860.120">
    <property type="entry name" value="RNA polymerase II, clamp domain"/>
    <property type="match status" value="1"/>
</dbReference>
<dbReference type="Gene3D" id="1.10.274.100">
    <property type="entry name" value="RNA polymerase Rpb1, domain 3"/>
    <property type="match status" value="1"/>
</dbReference>
<dbReference type="HAMAP" id="MF_01322">
    <property type="entry name" value="RNApol_bact_RpoC"/>
    <property type="match status" value="1"/>
</dbReference>
<dbReference type="InterPro" id="IPR045867">
    <property type="entry name" value="DNA-dir_RpoC_beta_prime"/>
</dbReference>
<dbReference type="InterPro" id="IPR012754">
    <property type="entry name" value="DNA-dir_RpoC_beta_prime_bact"/>
</dbReference>
<dbReference type="InterPro" id="IPR000722">
    <property type="entry name" value="RNA_pol_asu"/>
</dbReference>
<dbReference type="InterPro" id="IPR006592">
    <property type="entry name" value="RNA_pol_N"/>
</dbReference>
<dbReference type="InterPro" id="IPR007080">
    <property type="entry name" value="RNA_pol_Rpb1_1"/>
</dbReference>
<dbReference type="InterPro" id="IPR007066">
    <property type="entry name" value="RNA_pol_Rpb1_3"/>
</dbReference>
<dbReference type="InterPro" id="IPR042102">
    <property type="entry name" value="RNA_pol_Rpb1_3_sf"/>
</dbReference>
<dbReference type="InterPro" id="IPR007083">
    <property type="entry name" value="RNA_pol_Rpb1_4"/>
</dbReference>
<dbReference type="InterPro" id="IPR007081">
    <property type="entry name" value="RNA_pol_Rpb1_5"/>
</dbReference>
<dbReference type="InterPro" id="IPR044893">
    <property type="entry name" value="RNA_pol_Rpb1_clamp_domain"/>
</dbReference>
<dbReference type="InterPro" id="IPR038120">
    <property type="entry name" value="Rpb1_funnel_sf"/>
</dbReference>
<dbReference type="NCBIfam" id="TIGR02386">
    <property type="entry name" value="rpoC_TIGR"/>
    <property type="match status" value="1"/>
</dbReference>
<dbReference type="PANTHER" id="PTHR19376">
    <property type="entry name" value="DNA-DIRECTED RNA POLYMERASE"/>
    <property type="match status" value="1"/>
</dbReference>
<dbReference type="PANTHER" id="PTHR19376:SF54">
    <property type="entry name" value="DNA-DIRECTED RNA POLYMERASE SUBUNIT BETA"/>
    <property type="match status" value="1"/>
</dbReference>
<dbReference type="Pfam" id="PF04997">
    <property type="entry name" value="RNA_pol_Rpb1_1"/>
    <property type="match status" value="1"/>
</dbReference>
<dbReference type="Pfam" id="PF00623">
    <property type="entry name" value="RNA_pol_Rpb1_2"/>
    <property type="match status" value="1"/>
</dbReference>
<dbReference type="Pfam" id="PF04983">
    <property type="entry name" value="RNA_pol_Rpb1_3"/>
    <property type="match status" value="1"/>
</dbReference>
<dbReference type="Pfam" id="PF05000">
    <property type="entry name" value="RNA_pol_Rpb1_4"/>
    <property type="match status" value="1"/>
</dbReference>
<dbReference type="Pfam" id="PF04998">
    <property type="entry name" value="RNA_pol_Rpb1_5"/>
    <property type="match status" value="1"/>
</dbReference>
<dbReference type="SMART" id="SM00663">
    <property type="entry name" value="RPOLA_N"/>
    <property type="match status" value="1"/>
</dbReference>
<dbReference type="SUPFAM" id="SSF64484">
    <property type="entry name" value="beta and beta-prime subunits of DNA dependent RNA-polymerase"/>
    <property type="match status" value="1"/>
</dbReference>
<comment type="function">
    <text evidence="1">DNA-dependent RNA polymerase catalyzes the transcription of DNA into RNA using the four ribonucleoside triphosphates as substrates.</text>
</comment>
<comment type="catalytic activity">
    <reaction evidence="1">
        <text>RNA(n) + a ribonucleoside 5'-triphosphate = RNA(n+1) + diphosphate</text>
        <dbReference type="Rhea" id="RHEA:21248"/>
        <dbReference type="Rhea" id="RHEA-COMP:14527"/>
        <dbReference type="Rhea" id="RHEA-COMP:17342"/>
        <dbReference type="ChEBI" id="CHEBI:33019"/>
        <dbReference type="ChEBI" id="CHEBI:61557"/>
        <dbReference type="ChEBI" id="CHEBI:140395"/>
        <dbReference type="EC" id="2.7.7.6"/>
    </reaction>
</comment>
<comment type="cofactor">
    <cofactor evidence="1">
        <name>Mg(2+)</name>
        <dbReference type="ChEBI" id="CHEBI:18420"/>
    </cofactor>
    <text evidence="1">Binds 1 Mg(2+) ion per subunit.</text>
</comment>
<comment type="cofactor">
    <cofactor evidence="1">
        <name>Zn(2+)</name>
        <dbReference type="ChEBI" id="CHEBI:29105"/>
    </cofactor>
    <text evidence="1">Binds 2 Zn(2+) ions per subunit.</text>
</comment>
<comment type="subunit">
    <text evidence="1">The RNAP catalytic core consists of 2 alpha, 1 beta, 1 beta' and 1 omega subunit. When a sigma factor is associated with the core the holoenzyme is formed, which can initiate transcription.</text>
</comment>
<comment type="similarity">
    <text evidence="1">Belongs to the RNA polymerase beta' chain family.</text>
</comment>
<feature type="chain" id="PRO_0000067795" description="DNA-directed RNA polymerase subunit beta'">
    <location>
        <begin position="1"/>
        <end position="1207"/>
    </location>
</feature>
<feature type="binding site" evidence="1">
    <location>
        <position position="60"/>
    </location>
    <ligand>
        <name>Zn(2+)</name>
        <dbReference type="ChEBI" id="CHEBI:29105"/>
        <label>1</label>
    </ligand>
</feature>
<feature type="binding site" evidence="1">
    <location>
        <position position="62"/>
    </location>
    <ligand>
        <name>Zn(2+)</name>
        <dbReference type="ChEBI" id="CHEBI:29105"/>
        <label>1</label>
    </ligand>
</feature>
<feature type="binding site" evidence="1">
    <location>
        <position position="75"/>
    </location>
    <ligand>
        <name>Zn(2+)</name>
        <dbReference type="ChEBI" id="CHEBI:29105"/>
        <label>1</label>
    </ligand>
</feature>
<feature type="binding site" evidence="1">
    <location>
        <position position="78"/>
    </location>
    <ligand>
        <name>Zn(2+)</name>
        <dbReference type="ChEBI" id="CHEBI:29105"/>
        <label>1</label>
    </ligand>
</feature>
<feature type="binding site" evidence="1">
    <location>
        <position position="449"/>
    </location>
    <ligand>
        <name>Mg(2+)</name>
        <dbReference type="ChEBI" id="CHEBI:18420"/>
    </ligand>
</feature>
<feature type="binding site" evidence="1">
    <location>
        <position position="451"/>
    </location>
    <ligand>
        <name>Mg(2+)</name>
        <dbReference type="ChEBI" id="CHEBI:18420"/>
    </ligand>
</feature>
<feature type="binding site" evidence="1">
    <location>
        <position position="453"/>
    </location>
    <ligand>
        <name>Mg(2+)</name>
        <dbReference type="ChEBI" id="CHEBI:18420"/>
    </ligand>
</feature>
<feature type="binding site" evidence="1">
    <location>
        <position position="822"/>
    </location>
    <ligand>
        <name>Zn(2+)</name>
        <dbReference type="ChEBI" id="CHEBI:29105"/>
        <label>2</label>
    </ligand>
</feature>
<feature type="binding site" evidence="1">
    <location>
        <position position="896"/>
    </location>
    <ligand>
        <name>Zn(2+)</name>
        <dbReference type="ChEBI" id="CHEBI:29105"/>
        <label>2</label>
    </ligand>
</feature>
<feature type="binding site" evidence="1">
    <location>
        <position position="903"/>
    </location>
    <ligand>
        <name>Zn(2+)</name>
        <dbReference type="ChEBI" id="CHEBI:29105"/>
        <label>2</label>
    </ligand>
</feature>
<feature type="binding site" evidence="1">
    <location>
        <position position="906"/>
    </location>
    <ligand>
        <name>Zn(2+)</name>
        <dbReference type="ChEBI" id="CHEBI:29105"/>
        <label>2</label>
    </ligand>
</feature>
<organism>
    <name type="scientific">Staphylococcus aureus (strain MRSA252)</name>
    <dbReference type="NCBI Taxonomy" id="282458"/>
    <lineage>
        <taxon>Bacteria</taxon>
        <taxon>Bacillati</taxon>
        <taxon>Bacillota</taxon>
        <taxon>Bacilli</taxon>
        <taxon>Bacillales</taxon>
        <taxon>Staphylococcaceae</taxon>
        <taxon>Staphylococcus</taxon>
    </lineage>
</organism>
<keyword id="KW-0240">DNA-directed RNA polymerase</keyword>
<keyword id="KW-0460">Magnesium</keyword>
<keyword id="KW-0479">Metal-binding</keyword>
<keyword id="KW-0548">Nucleotidyltransferase</keyword>
<keyword id="KW-0804">Transcription</keyword>
<keyword id="KW-0808">Transferase</keyword>
<keyword id="KW-0862">Zinc</keyword>
<name>RPOC_STAAR</name>
<sequence>MIDVNNFHYMKIGLASPEKIRSWSFGEVKKPETINYRTLKPEKDGLFCERIFGPTKDWECSCGKYKRVRYKGMVCDRCGVEVTKSKVRRERMGHIELAAPVSHIWYFKGIPSRMGLLLDMSPRALEEVIYFASYVVVDPGPTGLEKKTLLSEAEFRDYYDKYPGQFVAKMGAEGIKDLLEEIDLDEELKLLRDELESATGQRLTRAIKRLEVVESFRNSGNKPSWMILDVLPIIPPEIRPMVQLDGGRFATSDLNDLYRRVINRNNRLKRLLDLGAPGIIVQNEKRMLQEAVDALIDNGRRGRPVTGPGNRPLKSLSHMLKGKQGRFRQNLLGKRVDYSGRSVIAVGPSLKMYQCGLPKEMALELFKPFVMKELVQREIATNIKNAKSKIERMDDEVWDVLEEVIREHPVLLNRAPTLHRLGIQAFEPTLVEGRAIRLHPLVTTAYNADFDGDQMAVHVPLSKEAQAEARMLMLAAQNILNPKDGKPVVTPSQDMVLGNYYLTLERKDAVNTGAIFNNTNEVLKAYANGFVHLHTRIGVHASSFNNPTFTEEQNKKILATSVGKIIFNEIIPDSFAYINEPTQENLERKTPNRYFIDPTTLGEGGLKEYFENEELIEPFNKKFLGNIIAEVFNRFSITDTSMMLDRMKDLGFKFSSKAGITVGVADIVVLPDKQQILDEHEKLVDRITKQFNRGLITEEERYNAVVEIWTDAKDQIQGELMQSLDKTNPIFMMSDSGARGNASNFTQLAGMRGLMAAPSGKIIELPITSSFREGLTVLEYFISTHGARKGLADTALKTADSGYLTRRLVDVAQDVIVREEDCGTDRGLLVSDIKEGTEMIEPFIERIEGRYSKETIRHPETDEVIIRPDELITPEIAKKITDAGIEQMYIRSAFTCNARHGVCEKCYGKNLATGEKVEVGEAVGTIAAQSIGEPGTQLTMRTFHTGGVAGSDITQGLPRIQEIFEARNPKGQAVITEIEGVVEDIKLAKDRQQEIVVKGANETRSYLASGTSRIIVEIGQPVQRGEVLTEGSIEPKNYLSVAGLNATESYLLKEVQKVYRMQGVEIDDKHVEVMVRQMLRKVRIIEAGDTKLLPGSLVDIHNFTDANREAFKHRKRPATAKPVLLGITKASLETESFLSAASFQETTRVLTDAAIKGKRDDLLGLKENVIIGKLIPAGTGMRRYSDVKYEKTAKPVAEVESQTEVTE</sequence>
<protein>
    <recommendedName>
        <fullName evidence="1">DNA-directed RNA polymerase subunit beta'</fullName>
        <shortName evidence="1">RNAP subunit beta'</shortName>
        <ecNumber evidence="1">2.7.7.6</ecNumber>
    </recommendedName>
    <alternativeName>
        <fullName evidence="1">RNA polymerase subunit beta'</fullName>
    </alternativeName>
    <alternativeName>
        <fullName evidence="1">Transcriptase subunit beta'</fullName>
    </alternativeName>
</protein>